<keyword id="KW-0002">3D-structure</keyword>
<keyword id="KW-0025">Alternative splicing</keyword>
<keyword id="KW-0378">Hydrolase</keyword>
<keyword id="KW-0597">Phosphoprotein</keyword>
<keyword id="KW-0645">Protease</keyword>
<keyword id="KW-1267">Proteomics identification</keyword>
<keyword id="KW-1185">Reference proteome</keyword>
<keyword id="KW-0788">Thiol protease</keyword>
<keyword id="KW-0833">Ubl conjugation pathway</keyword>
<dbReference type="EC" id="3.4.19.12" evidence="3"/>
<dbReference type="EMBL" id="CH471082">
    <property type="protein sequence ID" value="EAW77545.1"/>
    <property type="status" value="ALT_SEQ"/>
    <property type="molecule type" value="Genomic_DNA"/>
</dbReference>
<dbReference type="EMBL" id="CH471082">
    <property type="protein sequence ID" value="EAW77546.1"/>
    <property type="molecule type" value="Genomic_DNA"/>
</dbReference>
<dbReference type="EMBL" id="BC140811">
    <property type="protein sequence ID" value="AAI40812.1"/>
    <property type="molecule type" value="mRNA"/>
</dbReference>
<dbReference type="EMBL" id="BC144616">
    <property type="protein sequence ID" value="AAI44617.1"/>
    <property type="molecule type" value="mRNA"/>
</dbReference>
<dbReference type="EMBL" id="AK075319">
    <property type="protein sequence ID" value="BAC11545.1"/>
    <property type="molecule type" value="mRNA"/>
</dbReference>
<dbReference type="EMBL" id="AB032990">
    <property type="protein sequence ID" value="BAA86478.1"/>
    <property type="molecule type" value="mRNA"/>
</dbReference>
<dbReference type="CCDS" id="CCDS42046.1">
    <molecule id="Q8NBR6-1"/>
</dbReference>
<dbReference type="CCDS" id="CCDS45268.1">
    <molecule id="Q8NBR6-2"/>
</dbReference>
<dbReference type="RefSeq" id="NP_001035540.1">
    <molecule id="Q8NBR6-1"/>
    <property type="nucleotide sequence ID" value="NM_001040450.3"/>
</dbReference>
<dbReference type="RefSeq" id="NP_001035543.1">
    <molecule id="Q8NBR6-2"/>
    <property type="nucleotide sequence ID" value="NM_001040453.3"/>
</dbReference>
<dbReference type="PDB" id="6Z49">
    <property type="method" value="X-ray"/>
    <property type="resolution" value="2.00 A"/>
    <property type="chains" value="A/B/C/D=241-504"/>
</dbReference>
<dbReference type="PDB" id="6Z7V">
    <property type="method" value="X-ray"/>
    <property type="resolution" value="2.65 A"/>
    <property type="chains" value="A/B=241-504"/>
</dbReference>
<dbReference type="PDB" id="7NPI">
    <property type="method" value="X-ray"/>
    <property type="resolution" value="2.81 A"/>
    <property type="chains" value="A/G/M/S/Y/e/k=241-504"/>
</dbReference>
<dbReference type="PDBsum" id="6Z49"/>
<dbReference type="PDBsum" id="6Z7V"/>
<dbReference type="PDBsum" id="7NPI"/>
<dbReference type="SASBDB" id="Q8NBR6"/>
<dbReference type="SMR" id="Q8NBR6"/>
<dbReference type="BioGRID" id="120085">
    <property type="interactions" value="32"/>
</dbReference>
<dbReference type="FunCoup" id="Q8NBR6">
    <property type="interactions" value="1873"/>
</dbReference>
<dbReference type="IntAct" id="Q8NBR6">
    <property type="interactions" value="21"/>
</dbReference>
<dbReference type="MINT" id="Q8NBR6"/>
<dbReference type="STRING" id="9606.ENSP00000452885"/>
<dbReference type="iPTMnet" id="Q8NBR6"/>
<dbReference type="PhosphoSitePlus" id="Q8NBR6"/>
<dbReference type="BioMuta" id="MINDY2"/>
<dbReference type="DMDM" id="205831477"/>
<dbReference type="jPOST" id="Q8NBR6"/>
<dbReference type="MassIVE" id="Q8NBR6"/>
<dbReference type="PaxDb" id="9606-ENSP00000452885"/>
<dbReference type="PeptideAtlas" id="Q8NBR6"/>
<dbReference type="ProteomicsDB" id="72812">
    <molecule id="Q8NBR6-1"/>
</dbReference>
<dbReference type="ProteomicsDB" id="72813">
    <molecule id="Q8NBR6-2"/>
</dbReference>
<dbReference type="Antibodypedia" id="63975">
    <property type="antibodies" value="60 antibodies from 12 providers"/>
</dbReference>
<dbReference type="DNASU" id="54629"/>
<dbReference type="Ensembl" id="ENST00000450403.3">
    <molecule id="Q8NBR6-2"/>
    <property type="protein sequence ID" value="ENSP00000393231.2"/>
    <property type="gene ID" value="ENSG00000128923.11"/>
</dbReference>
<dbReference type="Ensembl" id="ENST00000559228.6">
    <molecule id="Q8NBR6-1"/>
    <property type="protein sequence ID" value="ENSP00000452885.1"/>
    <property type="gene ID" value="ENSG00000128923.11"/>
</dbReference>
<dbReference type="GeneID" id="54629"/>
<dbReference type="KEGG" id="hsa:54629"/>
<dbReference type="MANE-Select" id="ENST00000559228.6">
    <property type="protein sequence ID" value="ENSP00000452885.1"/>
    <property type="RefSeq nucleotide sequence ID" value="NM_001040450.3"/>
    <property type="RefSeq protein sequence ID" value="NP_001035540.1"/>
</dbReference>
<dbReference type="UCSC" id="uc002afi.4">
    <molecule id="Q8NBR6-1"/>
    <property type="organism name" value="human"/>
</dbReference>
<dbReference type="AGR" id="HGNC:26954"/>
<dbReference type="CTD" id="54629"/>
<dbReference type="DisGeNET" id="54629"/>
<dbReference type="GeneCards" id="MINDY2"/>
<dbReference type="HGNC" id="HGNC:26954">
    <property type="gene designation" value="MINDY2"/>
</dbReference>
<dbReference type="HPA" id="ENSG00000128923">
    <property type="expression patterns" value="Low tissue specificity"/>
</dbReference>
<dbReference type="MIM" id="618408">
    <property type="type" value="gene"/>
</dbReference>
<dbReference type="neXtProt" id="NX_Q8NBR6"/>
<dbReference type="NIAGADS" id="ENSG00000128923"/>
<dbReference type="OpenTargets" id="ENSG00000128923"/>
<dbReference type="PharmGKB" id="PA142671873"/>
<dbReference type="VEuPathDB" id="HostDB:ENSG00000128923"/>
<dbReference type="eggNOG" id="KOG2427">
    <property type="taxonomic scope" value="Eukaryota"/>
</dbReference>
<dbReference type="GeneTree" id="ENSGT00390000016607"/>
<dbReference type="HOGENOM" id="CLU_022566_3_1_1"/>
<dbReference type="InParanoid" id="Q8NBR6"/>
<dbReference type="OMA" id="WKTENTP"/>
<dbReference type="OrthoDB" id="10261212at2759"/>
<dbReference type="PAN-GO" id="Q8NBR6">
    <property type="GO annotations" value="3 GO annotations based on evolutionary models"/>
</dbReference>
<dbReference type="PhylomeDB" id="Q8NBR6"/>
<dbReference type="TreeFam" id="TF314589"/>
<dbReference type="PathwayCommons" id="Q8NBR6"/>
<dbReference type="SignaLink" id="Q8NBR6"/>
<dbReference type="BioGRID-ORCS" id="54629">
    <property type="hits" value="110 hits in 1193 CRISPR screens"/>
</dbReference>
<dbReference type="ChiTaRS" id="MINDY2">
    <property type="organism name" value="human"/>
</dbReference>
<dbReference type="GenomeRNAi" id="54629"/>
<dbReference type="Pharos" id="Q8NBR6">
    <property type="development level" value="Tbio"/>
</dbReference>
<dbReference type="PRO" id="PR:Q8NBR6"/>
<dbReference type="Proteomes" id="UP000005640">
    <property type="component" value="Chromosome 15"/>
</dbReference>
<dbReference type="RNAct" id="Q8NBR6">
    <property type="molecule type" value="protein"/>
</dbReference>
<dbReference type="Bgee" id="ENSG00000128923">
    <property type="expression patterns" value="Expressed in trigeminal ganglion and 206 other cell types or tissues"/>
</dbReference>
<dbReference type="ExpressionAtlas" id="Q8NBR6">
    <property type="expression patterns" value="baseline and differential"/>
</dbReference>
<dbReference type="GO" id="GO:0005654">
    <property type="term" value="C:nucleoplasm"/>
    <property type="evidence" value="ECO:0000314"/>
    <property type="project" value="HPA"/>
</dbReference>
<dbReference type="GO" id="GO:0016807">
    <property type="term" value="F:cysteine-type carboxypeptidase activity"/>
    <property type="evidence" value="ECO:0000314"/>
    <property type="project" value="UniProtKB"/>
</dbReference>
<dbReference type="GO" id="GO:0004843">
    <property type="term" value="F:cysteine-type deubiquitinase activity"/>
    <property type="evidence" value="ECO:0007669"/>
    <property type="project" value="UniProtKB-EC"/>
</dbReference>
<dbReference type="GO" id="GO:0071795">
    <property type="term" value="F:K11-linked polyubiquitin modification-dependent protein binding"/>
    <property type="evidence" value="ECO:0000314"/>
    <property type="project" value="UniProtKB"/>
</dbReference>
<dbReference type="GO" id="GO:1990380">
    <property type="term" value="F:K48-linked deubiquitinase activity"/>
    <property type="evidence" value="ECO:0000314"/>
    <property type="project" value="UniProtKB"/>
</dbReference>
<dbReference type="GO" id="GO:0036435">
    <property type="term" value="F:K48-linked polyubiquitin modification-dependent protein binding"/>
    <property type="evidence" value="ECO:0000314"/>
    <property type="project" value="UniProtKB"/>
</dbReference>
<dbReference type="GO" id="GO:0071796">
    <property type="term" value="F:K6-linked polyubiquitin modification-dependent protein binding"/>
    <property type="evidence" value="ECO:0000314"/>
    <property type="project" value="UniProtKB"/>
</dbReference>
<dbReference type="GO" id="GO:0070530">
    <property type="term" value="F:K63-linked polyubiquitin modification-dependent protein binding"/>
    <property type="evidence" value="ECO:0000314"/>
    <property type="project" value="UniProtKB"/>
</dbReference>
<dbReference type="GO" id="GO:0006508">
    <property type="term" value="P:proteolysis"/>
    <property type="evidence" value="ECO:0007669"/>
    <property type="project" value="UniProtKB-KW"/>
</dbReference>
<dbReference type="InterPro" id="IPR007518">
    <property type="entry name" value="MINDY"/>
</dbReference>
<dbReference type="InterPro" id="IPR033979">
    <property type="entry name" value="MINDY_domain"/>
</dbReference>
<dbReference type="PANTHER" id="PTHR18063">
    <property type="entry name" value="NF-E2 INDUCIBLE PROTEIN"/>
    <property type="match status" value="1"/>
</dbReference>
<dbReference type="PANTHER" id="PTHR18063:SF8">
    <property type="entry name" value="UBIQUITIN CARBOXYL-TERMINAL HYDROLASE MINDY-2"/>
    <property type="match status" value="1"/>
</dbReference>
<dbReference type="Pfam" id="PF04424">
    <property type="entry name" value="MINDY_DUB"/>
    <property type="match status" value="1"/>
</dbReference>
<reference key="1">
    <citation type="submission" date="2005-07" db="EMBL/GenBank/DDBJ databases">
        <authorList>
            <person name="Mural R.J."/>
            <person name="Istrail S."/>
            <person name="Sutton G.G."/>
            <person name="Florea L."/>
            <person name="Halpern A.L."/>
            <person name="Mobarry C.M."/>
            <person name="Lippert R."/>
            <person name="Walenz B."/>
            <person name="Shatkay H."/>
            <person name="Dew I."/>
            <person name="Miller J.R."/>
            <person name="Flanigan M.J."/>
            <person name="Edwards N.J."/>
            <person name="Bolanos R."/>
            <person name="Fasulo D."/>
            <person name="Halldorsson B.V."/>
            <person name="Hannenhalli S."/>
            <person name="Turner R."/>
            <person name="Yooseph S."/>
            <person name="Lu F."/>
            <person name="Nusskern D.R."/>
            <person name="Shue B.C."/>
            <person name="Zheng X.H."/>
            <person name="Zhong F."/>
            <person name="Delcher A.L."/>
            <person name="Huson D.H."/>
            <person name="Kravitz S.A."/>
            <person name="Mouchard L."/>
            <person name="Reinert K."/>
            <person name="Remington K.A."/>
            <person name="Clark A.G."/>
            <person name="Waterman M.S."/>
            <person name="Eichler E.E."/>
            <person name="Adams M.D."/>
            <person name="Hunkapiller M.W."/>
            <person name="Myers E.W."/>
            <person name="Venter J.C."/>
        </authorList>
    </citation>
    <scope>NUCLEOTIDE SEQUENCE [LARGE SCALE GENOMIC DNA]</scope>
</reference>
<reference key="2">
    <citation type="journal article" date="2004" name="Genome Res.">
        <title>The status, quality, and expansion of the NIH full-length cDNA project: the Mammalian Gene Collection (MGC).</title>
        <authorList>
            <consortium name="The MGC Project Team"/>
        </authorList>
    </citation>
    <scope>NUCLEOTIDE SEQUENCE [LARGE SCALE MRNA] (ISOFORM 2)</scope>
</reference>
<reference key="3">
    <citation type="journal article" date="2004" name="Nat. Genet.">
        <title>Complete sequencing and characterization of 21,243 full-length human cDNAs.</title>
        <authorList>
            <person name="Ota T."/>
            <person name="Suzuki Y."/>
            <person name="Nishikawa T."/>
            <person name="Otsuki T."/>
            <person name="Sugiyama T."/>
            <person name="Irie R."/>
            <person name="Wakamatsu A."/>
            <person name="Hayashi K."/>
            <person name="Sato H."/>
            <person name="Nagai K."/>
            <person name="Kimura K."/>
            <person name="Makita H."/>
            <person name="Sekine M."/>
            <person name="Obayashi M."/>
            <person name="Nishi T."/>
            <person name="Shibahara T."/>
            <person name="Tanaka T."/>
            <person name="Ishii S."/>
            <person name="Yamamoto J."/>
            <person name="Saito K."/>
            <person name="Kawai Y."/>
            <person name="Isono Y."/>
            <person name="Nakamura Y."/>
            <person name="Nagahari K."/>
            <person name="Murakami K."/>
            <person name="Yasuda T."/>
            <person name="Iwayanagi T."/>
            <person name="Wagatsuma M."/>
            <person name="Shiratori A."/>
            <person name="Sudo H."/>
            <person name="Hosoiri T."/>
            <person name="Kaku Y."/>
            <person name="Kodaira H."/>
            <person name="Kondo H."/>
            <person name="Sugawara M."/>
            <person name="Takahashi M."/>
            <person name="Kanda K."/>
            <person name="Yokoi T."/>
            <person name="Furuya T."/>
            <person name="Kikkawa E."/>
            <person name="Omura Y."/>
            <person name="Abe K."/>
            <person name="Kamihara K."/>
            <person name="Katsuta N."/>
            <person name="Sato K."/>
            <person name="Tanikawa M."/>
            <person name="Yamazaki M."/>
            <person name="Ninomiya K."/>
            <person name="Ishibashi T."/>
            <person name="Yamashita H."/>
            <person name="Murakawa K."/>
            <person name="Fujimori K."/>
            <person name="Tanai H."/>
            <person name="Kimata M."/>
            <person name="Watanabe M."/>
            <person name="Hiraoka S."/>
            <person name="Chiba Y."/>
            <person name="Ishida S."/>
            <person name="Ono Y."/>
            <person name="Takiguchi S."/>
            <person name="Watanabe S."/>
            <person name="Yosida M."/>
            <person name="Hotuta T."/>
            <person name="Kusano J."/>
            <person name="Kanehori K."/>
            <person name="Takahashi-Fujii A."/>
            <person name="Hara H."/>
            <person name="Tanase T.-O."/>
            <person name="Nomura Y."/>
            <person name="Togiya S."/>
            <person name="Komai F."/>
            <person name="Hara R."/>
            <person name="Takeuchi K."/>
            <person name="Arita M."/>
            <person name="Imose N."/>
            <person name="Musashino K."/>
            <person name="Yuuki H."/>
            <person name="Oshima A."/>
            <person name="Sasaki N."/>
            <person name="Aotsuka S."/>
            <person name="Yoshikawa Y."/>
            <person name="Matsunawa H."/>
            <person name="Ichihara T."/>
            <person name="Shiohata N."/>
            <person name="Sano S."/>
            <person name="Moriya S."/>
            <person name="Momiyama H."/>
            <person name="Satoh N."/>
            <person name="Takami S."/>
            <person name="Terashima Y."/>
            <person name="Suzuki O."/>
            <person name="Nakagawa S."/>
            <person name="Senoh A."/>
            <person name="Mizoguchi H."/>
            <person name="Goto Y."/>
            <person name="Shimizu F."/>
            <person name="Wakebe H."/>
            <person name="Hishigaki H."/>
            <person name="Watanabe T."/>
            <person name="Sugiyama A."/>
            <person name="Takemoto M."/>
            <person name="Kawakami B."/>
            <person name="Yamazaki M."/>
            <person name="Watanabe K."/>
            <person name="Kumagai A."/>
            <person name="Itakura S."/>
            <person name="Fukuzumi Y."/>
            <person name="Fujimori Y."/>
            <person name="Komiyama M."/>
            <person name="Tashiro H."/>
            <person name="Tanigami A."/>
            <person name="Fujiwara T."/>
            <person name="Ono T."/>
            <person name="Yamada K."/>
            <person name="Fujii Y."/>
            <person name="Ozaki K."/>
            <person name="Hirao M."/>
            <person name="Ohmori Y."/>
            <person name="Kawabata A."/>
            <person name="Hikiji T."/>
            <person name="Kobatake N."/>
            <person name="Inagaki H."/>
            <person name="Ikema Y."/>
            <person name="Okamoto S."/>
            <person name="Okitani R."/>
            <person name="Kawakami T."/>
            <person name="Noguchi S."/>
            <person name="Itoh T."/>
            <person name="Shigeta K."/>
            <person name="Senba T."/>
            <person name="Matsumura K."/>
            <person name="Nakajima Y."/>
            <person name="Mizuno T."/>
            <person name="Morinaga M."/>
            <person name="Sasaki M."/>
            <person name="Togashi T."/>
            <person name="Oyama M."/>
            <person name="Hata H."/>
            <person name="Watanabe M."/>
            <person name="Komatsu T."/>
            <person name="Mizushima-Sugano J."/>
            <person name="Satoh T."/>
            <person name="Shirai Y."/>
            <person name="Takahashi Y."/>
            <person name="Nakagawa K."/>
            <person name="Okumura K."/>
            <person name="Nagase T."/>
            <person name="Nomura N."/>
            <person name="Kikuchi H."/>
            <person name="Masuho Y."/>
            <person name="Yamashita R."/>
            <person name="Nakai K."/>
            <person name="Yada T."/>
            <person name="Nakamura Y."/>
            <person name="Ohara O."/>
            <person name="Isogai T."/>
            <person name="Sugano S."/>
        </authorList>
    </citation>
    <scope>NUCLEOTIDE SEQUENCE [LARGE SCALE MRNA] OF 1-605 (ISOFORM 1)</scope>
</reference>
<reference key="4">
    <citation type="journal article" date="1999" name="DNA Res.">
        <title>Characterization of cDNA clones selected by the GeneMark analysis from size-fractionated cDNA libraries from human brain.</title>
        <authorList>
            <person name="Hirosawa M."/>
            <person name="Nagase T."/>
            <person name="Ishikawa K."/>
            <person name="Kikuno R."/>
            <person name="Nomura N."/>
            <person name="Ohara O."/>
        </authorList>
    </citation>
    <scope>NUCLEOTIDE SEQUENCE [LARGE SCALE MRNA] OF 231-621 (ISOFORM 2)</scope>
    <source>
        <tissue>Brain</tissue>
    </source>
</reference>
<reference key="5">
    <citation type="journal article" date="2008" name="Proc. Natl. Acad. Sci. U.S.A.">
        <title>A quantitative atlas of mitotic phosphorylation.</title>
        <authorList>
            <person name="Dephoure N."/>
            <person name="Zhou C."/>
            <person name="Villen J."/>
            <person name="Beausoleil S.A."/>
            <person name="Bakalarski C.E."/>
            <person name="Elledge S.J."/>
            <person name="Gygi S.P."/>
        </authorList>
    </citation>
    <scope>PHOSPHORYLATION [LARGE SCALE ANALYSIS] AT SER-94</scope>
    <scope>IDENTIFICATION BY MASS SPECTROMETRY [LARGE SCALE ANALYSIS]</scope>
    <source>
        <tissue>Cervix carcinoma</tissue>
    </source>
</reference>
<reference key="6">
    <citation type="journal article" date="2013" name="J. Proteome Res.">
        <title>Toward a comprehensive characterization of a human cancer cell phosphoproteome.</title>
        <authorList>
            <person name="Zhou H."/>
            <person name="Di Palma S."/>
            <person name="Preisinger C."/>
            <person name="Peng M."/>
            <person name="Polat A.N."/>
            <person name="Heck A.J."/>
            <person name="Mohammed S."/>
        </authorList>
    </citation>
    <scope>PHOSPHORYLATION [LARGE SCALE ANALYSIS] AT SER-94</scope>
    <scope>IDENTIFICATION BY MASS SPECTROMETRY [LARGE SCALE ANALYSIS]</scope>
    <source>
        <tissue>Cervix carcinoma</tissue>
        <tissue>Erythroleukemia</tissue>
    </source>
</reference>
<reference key="7">
    <citation type="journal article" date="2016" name="Mol. Cell">
        <title>MINDY-1 is a member of an evolutionarily conserved and structurally distinct new family of deubiquitinating enzymes.</title>
        <authorList>
            <person name="Abdul Rehman S.A."/>
            <person name="Kristariyanto Y.A."/>
            <person name="Choi S.Y."/>
            <person name="Nkosi P.J."/>
            <person name="Weidlich S."/>
            <person name="Labib K."/>
            <person name="Hofmann K."/>
            <person name="Kulathu Y."/>
        </authorList>
    </citation>
    <scope>FUNCTION</scope>
    <scope>CATALYTIC ACTIVITY</scope>
    <scope>GENE FAMILY</scope>
</reference>
<reference key="8">
    <citation type="journal article" date="2017" name="EMBO Rep.">
        <title>A single MIU motif of MINDY-1 recognizes K48-linked polyubiquitin chains.</title>
        <authorList>
            <person name="Kristariyanto Y.A."/>
            <person name="Abdul Rehman S.A."/>
            <person name="Weidlich S."/>
            <person name="Knebel A."/>
            <person name="Kulathu Y."/>
        </authorList>
    </citation>
    <scope>BINDING TO POLYUBIQUITIN CHAINS</scope>
    <scope>MUTAGENESIS OF ALA-519 AND ALA-546</scope>
</reference>
<organism>
    <name type="scientific">Homo sapiens</name>
    <name type="common">Human</name>
    <dbReference type="NCBI Taxonomy" id="9606"/>
    <lineage>
        <taxon>Eukaryota</taxon>
        <taxon>Metazoa</taxon>
        <taxon>Chordata</taxon>
        <taxon>Craniata</taxon>
        <taxon>Vertebrata</taxon>
        <taxon>Euteleostomi</taxon>
        <taxon>Mammalia</taxon>
        <taxon>Eutheria</taxon>
        <taxon>Euarchontoglires</taxon>
        <taxon>Primates</taxon>
        <taxon>Haplorrhini</taxon>
        <taxon>Catarrhini</taxon>
        <taxon>Hominidae</taxon>
        <taxon>Homo</taxon>
    </lineage>
</organism>
<protein>
    <recommendedName>
        <fullName evidence="7">Ubiquitin carboxyl-terminal hydrolase MINDY-2</fullName>
        <ecNumber evidence="3">3.4.19.12</ecNumber>
    </recommendedName>
    <alternativeName>
        <fullName evidence="7">Deubiquitinating enzyme MINDY-2</fullName>
    </alternativeName>
    <alternativeName>
        <fullName>Protein FAM63B</fullName>
    </alternativeName>
</protein>
<comment type="function">
    <text evidence="3 4">Hydrolase that can remove 'Lys-48'-linked conjugated ubiquitin from proteins (PubMed:27292798). Binds to polyubiquitin chains of different linkage types, including 'Lys-6', 'Lys-11', 'Lys-29', 'Lys-33', 'Lys-48' and 'Lys-63' (PubMed:28082312). May play a regulatory role at the level of protein turnover (PubMed:27292798).</text>
</comment>
<comment type="catalytic activity">
    <reaction evidence="3">
        <text>Thiol-dependent hydrolysis of ester, thioester, amide, peptide and isopeptide bonds formed by the C-terminal Gly of ubiquitin (a 76-residue protein attached to proteins as an intracellular targeting signal).</text>
        <dbReference type="EC" id="3.4.19.12"/>
    </reaction>
</comment>
<comment type="alternative products">
    <event type="alternative splicing"/>
    <isoform>
        <id>Q8NBR6-1</id>
        <name>1</name>
        <sequence type="displayed"/>
    </isoform>
    <isoform>
        <id>Q8NBR6-2</id>
        <name>2</name>
        <sequence type="described" ref="VSP_034719"/>
    </isoform>
</comment>
<comment type="similarity">
    <text evidence="8">Belongs to the MINDY deubiquitinase family. FAM63 subfamily.</text>
</comment>
<comment type="sequence caution" evidence="8">
    <conflict type="erroneous gene model prediction">
        <sequence resource="EMBL-CDS" id="EAW77545"/>
    </conflict>
</comment>
<gene>
    <name evidence="10" type="primary">MINDY2</name>
    <name type="synonym">FAM63B</name>
    <name type="synonym">KIAA1164</name>
</gene>
<proteinExistence type="evidence at protein level"/>
<name>MINY2_HUMAN</name>
<feature type="chain" id="PRO_0000344042" description="Ubiquitin carboxyl-terminal hydrolase MINDY-2">
    <location>
        <begin position="1"/>
        <end position="621"/>
    </location>
</feature>
<feature type="region of interest" description="Disordered" evidence="2">
    <location>
        <begin position="1"/>
        <end position="106"/>
    </location>
</feature>
<feature type="region of interest" description="Disordered" evidence="2">
    <location>
        <begin position="119"/>
        <end position="179"/>
    </location>
</feature>
<feature type="region of interest" description="Ubiquitin-binding domain (UBD)" evidence="9">
    <location>
        <begin position="507"/>
        <end position="559"/>
    </location>
</feature>
<feature type="region of interest" description="Disordered" evidence="2">
    <location>
        <begin position="556"/>
        <end position="621"/>
    </location>
</feature>
<feature type="compositionally biased region" description="Low complexity" evidence="2">
    <location>
        <begin position="145"/>
        <end position="163"/>
    </location>
</feature>
<feature type="compositionally biased region" description="Low complexity" evidence="2">
    <location>
        <begin position="558"/>
        <end position="591"/>
    </location>
</feature>
<feature type="compositionally biased region" description="Basic and acidic residues" evidence="2">
    <location>
        <begin position="597"/>
        <end position="621"/>
    </location>
</feature>
<feature type="active site" description="Nucleophile" evidence="1">
    <location>
        <position position="266"/>
    </location>
</feature>
<feature type="active site" description="Proton acceptor" evidence="1">
    <location>
        <position position="448"/>
    </location>
</feature>
<feature type="site" description="Ubiquitin-binding" evidence="1">
    <location>
        <position position="542"/>
    </location>
</feature>
<feature type="site" description="Ubiquitin-binding" evidence="1">
    <location>
        <begin position="545"/>
        <end position="546"/>
    </location>
</feature>
<feature type="site" description="Ubiquitin-binding" evidence="1">
    <location>
        <position position="549"/>
    </location>
</feature>
<feature type="modified residue" description="Phosphoserine" evidence="11 12">
    <location>
        <position position="94"/>
    </location>
</feature>
<feature type="splice variant" id="VSP_034719" description="In isoform 2." evidence="5 6">
    <location>
        <position position="580"/>
    </location>
</feature>
<feature type="mutagenesis site" description="Strongly decreased binding to 'Lys-48' or 'Lys-63'-tetraubiquitin chains." evidence="4">
    <original>A</original>
    <variation>G</variation>
    <location>
        <position position="519"/>
    </location>
</feature>
<feature type="mutagenesis site" description="No effect on binding to 'Lys-48'- or 'Lys-63'-tetraubiquitin chains." evidence="4">
    <original>A</original>
    <variation>G</variation>
    <location>
        <position position="546"/>
    </location>
</feature>
<feature type="strand" evidence="13">
    <location>
        <begin position="242"/>
        <end position="250"/>
    </location>
</feature>
<feature type="strand" evidence="13">
    <location>
        <begin position="253"/>
        <end position="258"/>
    </location>
</feature>
<feature type="strand" evidence="14">
    <location>
        <begin position="262"/>
        <end position="264"/>
    </location>
</feature>
<feature type="helix" evidence="13">
    <location>
        <begin position="267"/>
        <end position="277"/>
    </location>
</feature>
<feature type="strand" evidence="13">
    <location>
        <begin position="289"/>
        <end position="291"/>
    </location>
</feature>
<feature type="helix" evidence="13">
    <location>
        <begin position="292"/>
        <end position="305"/>
    </location>
</feature>
<feature type="helix" evidence="13">
    <location>
        <begin position="313"/>
        <end position="316"/>
    </location>
</feature>
<feature type="helix" evidence="13">
    <location>
        <begin position="318"/>
        <end position="330"/>
    </location>
</feature>
<feature type="helix" evidence="13">
    <location>
        <begin position="331"/>
        <end position="333"/>
    </location>
</feature>
<feature type="strand" evidence="14">
    <location>
        <begin position="337"/>
        <end position="339"/>
    </location>
</feature>
<feature type="helix" evidence="13">
    <location>
        <begin position="355"/>
        <end position="361"/>
    </location>
</feature>
<feature type="strand" evidence="14">
    <location>
        <begin position="365"/>
        <end position="368"/>
    </location>
</feature>
<feature type="helix" evidence="13">
    <location>
        <begin position="376"/>
        <end position="382"/>
    </location>
</feature>
<feature type="helix" evidence="13">
    <location>
        <begin position="387"/>
        <end position="398"/>
    </location>
</feature>
<feature type="helix" evidence="13">
    <location>
        <begin position="403"/>
        <end position="418"/>
    </location>
</feature>
<feature type="turn" evidence="13">
    <location>
        <begin position="419"/>
        <end position="421"/>
    </location>
</feature>
<feature type="helix" evidence="13">
    <location>
        <begin position="425"/>
        <end position="434"/>
    </location>
</feature>
<feature type="strand" evidence="13">
    <location>
        <begin position="441"/>
        <end position="445"/>
    </location>
</feature>
<feature type="strand" evidence="13">
    <location>
        <begin position="448"/>
        <end position="455"/>
    </location>
</feature>
<feature type="strand" evidence="13">
    <location>
        <begin position="458"/>
        <end position="462"/>
    </location>
</feature>
<feature type="helix" evidence="13">
    <location>
        <begin position="466"/>
        <end position="468"/>
    </location>
</feature>
<feature type="strand" evidence="13">
    <location>
        <begin position="476"/>
        <end position="479"/>
    </location>
</feature>
<feature type="strand" evidence="13">
    <location>
        <begin position="482"/>
        <end position="484"/>
    </location>
</feature>
<accession>Q8NBR6</accession>
<accession>B2RTT8</accession>
<accession>Q9ULQ6</accession>
<evidence type="ECO:0000250" key="1">
    <source>
        <dbReference type="UniProtKB" id="Q8N5J2"/>
    </source>
</evidence>
<evidence type="ECO:0000256" key="2">
    <source>
        <dbReference type="SAM" id="MobiDB-lite"/>
    </source>
</evidence>
<evidence type="ECO:0000269" key="3">
    <source>
    </source>
</evidence>
<evidence type="ECO:0000269" key="4">
    <source>
    </source>
</evidence>
<evidence type="ECO:0000303" key="5">
    <source>
    </source>
</evidence>
<evidence type="ECO:0000303" key="6">
    <source>
    </source>
</evidence>
<evidence type="ECO:0000303" key="7">
    <source>
    </source>
</evidence>
<evidence type="ECO:0000305" key="8"/>
<evidence type="ECO:0000305" key="9">
    <source>
    </source>
</evidence>
<evidence type="ECO:0000312" key="10">
    <source>
        <dbReference type="HGNC" id="HGNC:26954"/>
    </source>
</evidence>
<evidence type="ECO:0007744" key="11">
    <source>
    </source>
</evidence>
<evidence type="ECO:0007744" key="12">
    <source>
    </source>
</evidence>
<evidence type="ECO:0007829" key="13">
    <source>
        <dbReference type="PDB" id="6Z49"/>
    </source>
</evidence>
<evidence type="ECO:0007829" key="14">
    <source>
        <dbReference type="PDB" id="6Z7V"/>
    </source>
</evidence>
<sequence>MESSPESLQPLEHGVAAGPASGTGSSQEGLQETRLAAGDGPGVWAAETSGGNGLGAAAARRSLPDSASPAGSPEVPGPCSSSAGLDLKDSGLESPAAAEAPLRGQYKVTASPETAVAGVGHELGTAGDAGARPDLAGTCQAELTAAGSEEPSSAGGLSSSCSDPSPPGESPSLDSLESFSNLHSFPSSCEFNSEEGAENRVPEEEEGAAVLPGAVPLCKEEEGEETAQVLAASKERFPGQSVYHIKWIQWKEENTPIITQNENGPCPLLAILNVLLLAWKVKLPPMMEIITAEQLMEYLGDYMLDAKPKEISEIQRLNYEQNMSDAMAILHKLQTGLDVNVRFTGVRVFEYTPECIVFDLLDIPLYHGWLVDPQIDDIVKAVGNCSYNQLVEKIISCKQSDNSELVSEGFVAEQFLNNTATQLTYHGLCELTSTVQEGELCVFFRNNHFSTMTKYKGQLYLLVTDQGFLTEEKVVWESLHNVDGDGNFCDSEFHLRPPSDPETVYKGQQDQIDQDYLMALSLQQEQQSQEINWEQIPEGISDLELAKKLQEEEDRRASQYYQEQEQAAAAAAAASTQAQQGQPAQASPSSGRQSGNSERKRKEPREKDKEKEKEKNSCVIL</sequence>